<dbReference type="EC" id="4.6.1.17" evidence="1"/>
<dbReference type="EMBL" id="BA000035">
    <property type="protein sequence ID" value="BAC16996.1"/>
    <property type="molecule type" value="Genomic_DNA"/>
</dbReference>
<dbReference type="RefSeq" id="WP_006768504.1">
    <property type="nucleotide sequence ID" value="NC_004369.1"/>
</dbReference>
<dbReference type="SMR" id="Q8FU35"/>
<dbReference type="STRING" id="196164.gene:10740577"/>
<dbReference type="KEGG" id="cef:CE0186"/>
<dbReference type="eggNOG" id="COG0315">
    <property type="taxonomic scope" value="Bacteria"/>
</dbReference>
<dbReference type="HOGENOM" id="CLU_074693_1_1_11"/>
<dbReference type="OrthoDB" id="9794429at2"/>
<dbReference type="UniPathway" id="UPA00344"/>
<dbReference type="Proteomes" id="UP000001409">
    <property type="component" value="Chromosome"/>
</dbReference>
<dbReference type="GO" id="GO:0061799">
    <property type="term" value="F:cyclic pyranopterin monophosphate synthase activity"/>
    <property type="evidence" value="ECO:0007669"/>
    <property type="project" value="UniProtKB-UniRule"/>
</dbReference>
<dbReference type="GO" id="GO:0006777">
    <property type="term" value="P:Mo-molybdopterin cofactor biosynthetic process"/>
    <property type="evidence" value="ECO:0007669"/>
    <property type="project" value="UniProtKB-UniRule"/>
</dbReference>
<dbReference type="CDD" id="cd01420">
    <property type="entry name" value="MoaC_PE"/>
    <property type="match status" value="1"/>
</dbReference>
<dbReference type="Gene3D" id="3.30.70.640">
    <property type="entry name" value="Molybdopterin cofactor biosynthesis C (MoaC) domain"/>
    <property type="match status" value="1"/>
</dbReference>
<dbReference type="HAMAP" id="MF_01224_B">
    <property type="entry name" value="MoaC_B"/>
    <property type="match status" value="1"/>
</dbReference>
<dbReference type="InterPro" id="IPR023045">
    <property type="entry name" value="MoaC"/>
</dbReference>
<dbReference type="InterPro" id="IPR047594">
    <property type="entry name" value="MoaC_bact/euk"/>
</dbReference>
<dbReference type="InterPro" id="IPR036522">
    <property type="entry name" value="MoaC_sf"/>
</dbReference>
<dbReference type="InterPro" id="IPR050105">
    <property type="entry name" value="MoCo_biosynth_MoaA/MoaC"/>
</dbReference>
<dbReference type="InterPro" id="IPR002820">
    <property type="entry name" value="Mopterin_CF_biosynth-C_dom"/>
</dbReference>
<dbReference type="NCBIfam" id="TIGR00581">
    <property type="entry name" value="moaC"/>
    <property type="match status" value="1"/>
</dbReference>
<dbReference type="NCBIfam" id="NF006870">
    <property type="entry name" value="PRK09364.1"/>
    <property type="match status" value="1"/>
</dbReference>
<dbReference type="PANTHER" id="PTHR22960">
    <property type="entry name" value="MOLYBDOPTERIN COFACTOR SYNTHESIS PROTEIN A"/>
    <property type="match status" value="1"/>
</dbReference>
<dbReference type="Pfam" id="PF01967">
    <property type="entry name" value="MoaC"/>
    <property type="match status" value="1"/>
</dbReference>
<dbReference type="SUPFAM" id="SSF55040">
    <property type="entry name" value="Molybdenum cofactor biosynthesis protein C, MoaC"/>
    <property type="match status" value="1"/>
</dbReference>
<comment type="function">
    <text evidence="1">Catalyzes the conversion of (8S)-3',8-cyclo-7,8-dihydroguanosine 5'-triphosphate to cyclic pyranopterin monophosphate (cPMP).</text>
</comment>
<comment type="catalytic activity">
    <reaction evidence="1">
        <text>(8S)-3',8-cyclo-7,8-dihydroguanosine 5'-triphosphate = cyclic pyranopterin phosphate + diphosphate</text>
        <dbReference type="Rhea" id="RHEA:49580"/>
        <dbReference type="ChEBI" id="CHEBI:33019"/>
        <dbReference type="ChEBI" id="CHEBI:59648"/>
        <dbReference type="ChEBI" id="CHEBI:131766"/>
        <dbReference type="EC" id="4.6.1.17"/>
    </reaction>
</comment>
<comment type="pathway">
    <text evidence="1">Cofactor biosynthesis; molybdopterin biosynthesis.</text>
</comment>
<comment type="subunit">
    <text evidence="1">Homohexamer; trimer of dimers.</text>
</comment>
<comment type="similarity">
    <text evidence="1">Belongs to the MoaC family.</text>
</comment>
<feature type="chain" id="PRO_0000097795" description="Cyclic pyranopterin monophosphate synthase">
    <location>
        <begin position="1"/>
        <end position="155"/>
    </location>
</feature>
<feature type="active site" evidence="1">
    <location>
        <position position="126"/>
    </location>
</feature>
<feature type="binding site" evidence="1">
    <location>
        <begin position="75"/>
        <end position="77"/>
    </location>
    <ligand>
        <name>substrate</name>
    </ligand>
</feature>
<feature type="binding site" evidence="1">
    <location>
        <begin position="111"/>
        <end position="112"/>
    </location>
    <ligand>
        <name>substrate</name>
    </ligand>
</feature>
<sequence length="155" mass="16341">MSELTHVRADGSAHMVDVTAKAETSRTAVAEGFVRTRADVVDKLFTADLPKGDALPVARVAGIMGAKKTPEIIPLCHPLPLGKITVDFERLPDGVRIEASVKTRGVTGVEMEALTAVTTAALTVYDMIKAVDKMAVIDGVRVLAKTGGKSGDWSV</sequence>
<gene>
    <name evidence="1" type="primary">moaC</name>
    <name type="ordered locus">CE0186</name>
</gene>
<accession>Q8FU35</accession>
<evidence type="ECO:0000255" key="1">
    <source>
        <dbReference type="HAMAP-Rule" id="MF_01224"/>
    </source>
</evidence>
<protein>
    <recommendedName>
        <fullName evidence="1">Cyclic pyranopterin monophosphate synthase</fullName>
        <ecNumber evidence="1">4.6.1.17</ecNumber>
    </recommendedName>
    <alternativeName>
        <fullName evidence="1">Molybdenum cofactor biosynthesis protein C</fullName>
    </alternativeName>
</protein>
<proteinExistence type="inferred from homology"/>
<keyword id="KW-0456">Lyase</keyword>
<keyword id="KW-0501">Molybdenum cofactor biosynthesis</keyword>
<keyword id="KW-1185">Reference proteome</keyword>
<name>MOAC_COREF</name>
<organism>
    <name type="scientific">Corynebacterium efficiens (strain DSM 44549 / YS-314 / AJ 12310 / JCM 11189 / NBRC 100395)</name>
    <dbReference type="NCBI Taxonomy" id="196164"/>
    <lineage>
        <taxon>Bacteria</taxon>
        <taxon>Bacillati</taxon>
        <taxon>Actinomycetota</taxon>
        <taxon>Actinomycetes</taxon>
        <taxon>Mycobacteriales</taxon>
        <taxon>Corynebacteriaceae</taxon>
        <taxon>Corynebacterium</taxon>
    </lineage>
</organism>
<reference key="1">
    <citation type="journal article" date="2003" name="Genome Res.">
        <title>Comparative complete genome sequence analysis of the amino acid replacements responsible for the thermostability of Corynebacterium efficiens.</title>
        <authorList>
            <person name="Nishio Y."/>
            <person name="Nakamura Y."/>
            <person name="Kawarabayasi Y."/>
            <person name="Usuda Y."/>
            <person name="Kimura E."/>
            <person name="Sugimoto S."/>
            <person name="Matsui K."/>
            <person name="Yamagishi A."/>
            <person name="Kikuchi H."/>
            <person name="Ikeo K."/>
            <person name="Gojobori T."/>
        </authorList>
    </citation>
    <scope>NUCLEOTIDE SEQUENCE [LARGE SCALE GENOMIC DNA]</scope>
    <source>
        <strain>DSM 44549 / YS-314 / AJ 12310 / JCM 11189 / NBRC 100395</strain>
    </source>
</reference>